<comment type="similarity">
    <text evidence="1">Belongs to the UPF0275 family.</text>
</comment>
<sequence length="137" mass="16163">MILSFEYINSFNRLIPICDSCSNYPIGSYVATYIRLFGKNEFEEKGIYDDIVNISIENEFVGFDGIDAFIEGDKVRIGFYLYGKGDEPEDYDPEESEFEIIDRKELIYILKRWKVFIHKPITDPHYQEIIDTKEAYL</sequence>
<dbReference type="EMBL" id="AE004439">
    <property type="protein sequence ID" value="AAK02573.1"/>
    <property type="molecule type" value="Genomic_DNA"/>
</dbReference>
<dbReference type="STRING" id="272843.PM0489"/>
<dbReference type="EnsemblBacteria" id="AAK02573">
    <property type="protein sequence ID" value="AAK02573"/>
    <property type="gene ID" value="PM0489"/>
</dbReference>
<dbReference type="KEGG" id="pmu:PM0489"/>
<dbReference type="HOGENOM" id="CLU_1842217_0_0_6"/>
<dbReference type="OrthoDB" id="89406at2"/>
<dbReference type="Proteomes" id="UP000000809">
    <property type="component" value="Chromosome"/>
</dbReference>
<dbReference type="InterPro" id="IPR035416">
    <property type="entry name" value="DUF5376"/>
</dbReference>
<dbReference type="Pfam" id="PF17346">
    <property type="entry name" value="DUF5376"/>
    <property type="match status" value="1"/>
</dbReference>
<reference key="1">
    <citation type="journal article" date="2001" name="Proc. Natl. Acad. Sci. U.S.A.">
        <title>Complete genomic sequence of Pasteurella multocida Pm70.</title>
        <authorList>
            <person name="May B.J."/>
            <person name="Zhang Q."/>
            <person name="Li L.L."/>
            <person name="Paustian M.L."/>
            <person name="Whittam T.S."/>
            <person name="Kapur V."/>
        </authorList>
    </citation>
    <scope>NUCLEOTIDE SEQUENCE [LARGE SCALE GENOMIC DNA]</scope>
    <source>
        <strain>Pm70</strain>
    </source>
</reference>
<feature type="chain" id="PRO_0000220582" description="UPF0275 protein PM0489">
    <location>
        <begin position="1"/>
        <end position="137"/>
    </location>
</feature>
<gene>
    <name type="ordered locus">PM0489</name>
</gene>
<name>Y489_PASMU</name>
<protein>
    <recommendedName>
        <fullName>UPF0275 protein PM0489</fullName>
    </recommendedName>
</protein>
<proteinExistence type="inferred from homology"/>
<accession>Q9CNE3</accession>
<evidence type="ECO:0000305" key="1"/>
<keyword id="KW-1185">Reference proteome</keyword>
<organism>
    <name type="scientific">Pasteurella multocida (strain Pm70)</name>
    <dbReference type="NCBI Taxonomy" id="272843"/>
    <lineage>
        <taxon>Bacteria</taxon>
        <taxon>Pseudomonadati</taxon>
        <taxon>Pseudomonadota</taxon>
        <taxon>Gammaproteobacteria</taxon>
        <taxon>Pasteurellales</taxon>
        <taxon>Pasteurellaceae</taxon>
        <taxon>Pasteurella</taxon>
    </lineage>
</organism>